<dbReference type="EMBL" id="AB062738">
    <property type="protein sequence ID" value="BAB71851.1"/>
    <property type="molecule type" value="mRNA"/>
</dbReference>
<dbReference type="EMBL" id="AC007727">
    <property type="protein sequence ID" value="AAD41428.1"/>
    <property type="status" value="ALT_SEQ"/>
    <property type="molecule type" value="Genomic_DNA"/>
</dbReference>
<dbReference type="EMBL" id="CP002684">
    <property type="protein sequence ID" value="AEE30148.1"/>
    <property type="molecule type" value="Genomic_DNA"/>
</dbReference>
<dbReference type="PIR" id="H86350">
    <property type="entry name" value="H86350"/>
</dbReference>
<dbReference type="RefSeq" id="NP_173592.3">
    <property type="nucleotide sequence ID" value="NM_102022.4"/>
</dbReference>
<dbReference type="SMR" id="Q8W5R6"/>
<dbReference type="FunCoup" id="Q8W5R6">
    <property type="interactions" value="536"/>
</dbReference>
<dbReference type="STRING" id="3702.Q8W5R6"/>
<dbReference type="iPTMnet" id="Q8W5R6"/>
<dbReference type="PaxDb" id="3702-AT1G21730.1"/>
<dbReference type="ProteomicsDB" id="250698"/>
<dbReference type="EnsemblPlants" id="AT1G21730.1">
    <property type="protein sequence ID" value="AT1G21730.1"/>
    <property type="gene ID" value="AT1G21730"/>
</dbReference>
<dbReference type="GeneID" id="838777"/>
<dbReference type="Gramene" id="AT1G21730.1">
    <property type="protein sequence ID" value="AT1G21730.1"/>
    <property type="gene ID" value="AT1G21730"/>
</dbReference>
<dbReference type="KEGG" id="ath:AT1G21730"/>
<dbReference type="Araport" id="AT1G21730"/>
<dbReference type="TAIR" id="AT1G21730">
    <property type="gene designation" value="KIN7.1"/>
</dbReference>
<dbReference type="eggNOG" id="KOG0242">
    <property type="taxonomic scope" value="Eukaryota"/>
</dbReference>
<dbReference type="HOGENOM" id="CLU_004957_1_0_1"/>
<dbReference type="InParanoid" id="Q8W5R6"/>
<dbReference type="OMA" id="MWMLVAE"/>
<dbReference type="PhylomeDB" id="Q8W5R6"/>
<dbReference type="PRO" id="PR:Q8W5R6"/>
<dbReference type="Proteomes" id="UP000006548">
    <property type="component" value="Chromosome 1"/>
</dbReference>
<dbReference type="ExpressionAtlas" id="Q8W5R6">
    <property type="expression patterns" value="baseline and differential"/>
</dbReference>
<dbReference type="GO" id="GO:0005874">
    <property type="term" value="C:microtubule"/>
    <property type="evidence" value="ECO:0007669"/>
    <property type="project" value="UniProtKB-KW"/>
</dbReference>
<dbReference type="GO" id="GO:0005739">
    <property type="term" value="C:mitochondrion"/>
    <property type="evidence" value="ECO:0007669"/>
    <property type="project" value="UniProtKB-SubCell"/>
</dbReference>
<dbReference type="GO" id="GO:0005524">
    <property type="term" value="F:ATP binding"/>
    <property type="evidence" value="ECO:0007669"/>
    <property type="project" value="UniProtKB-KW"/>
</dbReference>
<dbReference type="GO" id="GO:0008017">
    <property type="term" value="F:microtubule binding"/>
    <property type="evidence" value="ECO:0007669"/>
    <property type="project" value="InterPro"/>
</dbReference>
<dbReference type="GO" id="GO:0003777">
    <property type="term" value="F:microtubule motor activity"/>
    <property type="evidence" value="ECO:0007669"/>
    <property type="project" value="InterPro"/>
</dbReference>
<dbReference type="GO" id="GO:0007018">
    <property type="term" value="P:microtubule-based movement"/>
    <property type="evidence" value="ECO:0007669"/>
    <property type="project" value="InterPro"/>
</dbReference>
<dbReference type="CDD" id="cd01374">
    <property type="entry name" value="KISc_CENP_E"/>
    <property type="match status" value="1"/>
</dbReference>
<dbReference type="FunFam" id="3.40.850.10:FF:000014">
    <property type="entry name" value="Kinesin-like protein KIN-7G"/>
    <property type="match status" value="1"/>
</dbReference>
<dbReference type="Gene3D" id="3.40.850.10">
    <property type="entry name" value="Kinesin motor domain"/>
    <property type="match status" value="1"/>
</dbReference>
<dbReference type="InterPro" id="IPR027640">
    <property type="entry name" value="Kinesin-like_fam"/>
</dbReference>
<dbReference type="InterPro" id="IPR019821">
    <property type="entry name" value="Kinesin_motor_CS"/>
</dbReference>
<dbReference type="InterPro" id="IPR001752">
    <property type="entry name" value="Kinesin_motor_dom"/>
</dbReference>
<dbReference type="InterPro" id="IPR036961">
    <property type="entry name" value="Kinesin_motor_dom_sf"/>
</dbReference>
<dbReference type="InterPro" id="IPR027417">
    <property type="entry name" value="P-loop_NTPase"/>
</dbReference>
<dbReference type="PANTHER" id="PTHR47968">
    <property type="entry name" value="CENTROMERE PROTEIN E"/>
    <property type="match status" value="1"/>
</dbReference>
<dbReference type="PANTHER" id="PTHR47968:SF33">
    <property type="entry name" value="KINESIN-LIKE PROTEIN KIN-7C, MITOCHONDRIAL ISOFORM X1"/>
    <property type="match status" value="1"/>
</dbReference>
<dbReference type="Pfam" id="PF00225">
    <property type="entry name" value="Kinesin"/>
    <property type="match status" value="1"/>
</dbReference>
<dbReference type="PRINTS" id="PR00380">
    <property type="entry name" value="KINESINHEAVY"/>
</dbReference>
<dbReference type="SMART" id="SM00129">
    <property type="entry name" value="KISc"/>
    <property type="match status" value="1"/>
</dbReference>
<dbReference type="SUPFAM" id="SSF52540">
    <property type="entry name" value="P-loop containing nucleoside triphosphate hydrolases"/>
    <property type="match status" value="1"/>
</dbReference>
<dbReference type="PROSITE" id="PS00411">
    <property type="entry name" value="KINESIN_MOTOR_1"/>
    <property type="match status" value="1"/>
</dbReference>
<dbReference type="PROSITE" id="PS50067">
    <property type="entry name" value="KINESIN_MOTOR_2"/>
    <property type="match status" value="1"/>
</dbReference>
<keyword id="KW-0067">ATP-binding</keyword>
<keyword id="KW-0175">Coiled coil</keyword>
<keyword id="KW-0493">Microtubule</keyword>
<keyword id="KW-0496">Mitochondrion</keyword>
<keyword id="KW-0505">Motor protein</keyword>
<keyword id="KW-0547">Nucleotide-binding</keyword>
<keyword id="KW-1185">Reference proteome</keyword>
<keyword id="KW-0809">Transit peptide</keyword>
<gene>
    <name evidence="6" type="primary">KIN7C</name>
    <name evidence="9" type="synonym">MKRP1</name>
    <name evidence="7" type="ordered locus">At1g21730</name>
    <name evidence="8" type="ORF">F8K7.17</name>
</gene>
<organism>
    <name type="scientific">Arabidopsis thaliana</name>
    <name type="common">Mouse-ear cress</name>
    <dbReference type="NCBI Taxonomy" id="3702"/>
    <lineage>
        <taxon>Eukaryota</taxon>
        <taxon>Viridiplantae</taxon>
        <taxon>Streptophyta</taxon>
        <taxon>Embryophyta</taxon>
        <taxon>Tracheophyta</taxon>
        <taxon>Spermatophyta</taxon>
        <taxon>Magnoliopsida</taxon>
        <taxon>eudicotyledons</taxon>
        <taxon>Gunneridae</taxon>
        <taxon>Pentapetalae</taxon>
        <taxon>rosids</taxon>
        <taxon>malvids</taxon>
        <taxon>Brassicales</taxon>
        <taxon>Brassicaceae</taxon>
        <taxon>Camelineae</taxon>
        <taxon>Arabidopsis</taxon>
    </lineage>
</organism>
<reference key="1">
    <citation type="journal article" date="2001" name="Plant Physiol.">
        <title>Kinesin-related proteins with a mitochondrial targeting signal.</title>
        <authorList>
            <person name="Itoh R."/>
            <person name="Fujiwara M."/>
            <person name="Yoshida S."/>
        </authorList>
    </citation>
    <scope>NUCLEOTIDE SEQUENCE [MRNA]</scope>
</reference>
<reference key="2">
    <citation type="journal article" date="2000" name="Nature">
        <title>Sequence and analysis of chromosome 1 of the plant Arabidopsis thaliana.</title>
        <authorList>
            <person name="Theologis A."/>
            <person name="Ecker J.R."/>
            <person name="Palm C.J."/>
            <person name="Federspiel N.A."/>
            <person name="Kaul S."/>
            <person name="White O."/>
            <person name="Alonso J."/>
            <person name="Altafi H."/>
            <person name="Araujo R."/>
            <person name="Bowman C.L."/>
            <person name="Brooks S.Y."/>
            <person name="Buehler E."/>
            <person name="Chan A."/>
            <person name="Chao Q."/>
            <person name="Chen H."/>
            <person name="Cheuk R.F."/>
            <person name="Chin C.W."/>
            <person name="Chung M.K."/>
            <person name="Conn L."/>
            <person name="Conway A.B."/>
            <person name="Conway A.R."/>
            <person name="Creasy T.H."/>
            <person name="Dewar K."/>
            <person name="Dunn P."/>
            <person name="Etgu P."/>
            <person name="Feldblyum T.V."/>
            <person name="Feng J.-D."/>
            <person name="Fong B."/>
            <person name="Fujii C.Y."/>
            <person name="Gill J.E."/>
            <person name="Goldsmith A.D."/>
            <person name="Haas B."/>
            <person name="Hansen N.F."/>
            <person name="Hughes B."/>
            <person name="Huizar L."/>
            <person name="Hunter J.L."/>
            <person name="Jenkins J."/>
            <person name="Johnson-Hopson C."/>
            <person name="Khan S."/>
            <person name="Khaykin E."/>
            <person name="Kim C.J."/>
            <person name="Koo H.L."/>
            <person name="Kremenetskaia I."/>
            <person name="Kurtz D.B."/>
            <person name="Kwan A."/>
            <person name="Lam B."/>
            <person name="Langin-Hooper S."/>
            <person name="Lee A."/>
            <person name="Lee J.M."/>
            <person name="Lenz C.A."/>
            <person name="Li J.H."/>
            <person name="Li Y.-P."/>
            <person name="Lin X."/>
            <person name="Liu S.X."/>
            <person name="Liu Z.A."/>
            <person name="Luros J.S."/>
            <person name="Maiti R."/>
            <person name="Marziali A."/>
            <person name="Militscher J."/>
            <person name="Miranda M."/>
            <person name="Nguyen M."/>
            <person name="Nierman W.C."/>
            <person name="Osborne B.I."/>
            <person name="Pai G."/>
            <person name="Peterson J."/>
            <person name="Pham P.K."/>
            <person name="Rizzo M."/>
            <person name="Rooney T."/>
            <person name="Rowley D."/>
            <person name="Sakano H."/>
            <person name="Salzberg S.L."/>
            <person name="Schwartz J.R."/>
            <person name="Shinn P."/>
            <person name="Southwick A.M."/>
            <person name="Sun H."/>
            <person name="Tallon L.J."/>
            <person name="Tambunga G."/>
            <person name="Toriumi M.J."/>
            <person name="Town C.D."/>
            <person name="Utterback T."/>
            <person name="Van Aken S."/>
            <person name="Vaysberg M."/>
            <person name="Vysotskaia V.S."/>
            <person name="Walker M."/>
            <person name="Wu D."/>
            <person name="Yu G."/>
            <person name="Fraser C.M."/>
            <person name="Venter J.C."/>
            <person name="Davis R.W."/>
        </authorList>
    </citation>
    <scope>NUCLEOTIDE SEQUENCE [LARGE SCALE GENOMIC DNA]</scope>
    <source>
        <strain>cv. Columbia</strain>
    </source>
</reference>
<reference key="3">
    <citation type="journal article" date="2017" name="Plant J.">
        <title>Araport11: a complete reannotation of the Arabidopsis thaliana reference genome.</title>
        <authorList>
            <person name="Cheng C.Y."/>
            <person name="Krishnakumar V."/>
            <person name="Chan A.P."/>
            <person name="Thibaud-Nissen F."/>
            <person name="Schobel S."/>
            <person name="Town C.D."/>
        </authorList>
    </citation>
    <scope>GENOME REANNOTATION</scope>
    <source>
        <strain>cv. Columbia</strain>
    </source>
</reference>
<reference key="4">
    <citation type="journal article" date="2001" name="BMC Genomics">
        <title>Kinesins in the Arabidopsis genome: a comparative analysis among eukaryotes.</title>
        <authorList>
            <person name="Reddy A.S."/>
            <person name="Day I.S."/>
        </authorList>
    </citation>
    <scope>GENE FAMILY</scope>
</reference>
<reference key="5">
    <citation type="journal article" date="2006" name="BMC Genomics">
        <title>Comprehensive comparative analysis of kinesins in photosynthetic eukaryotes.</title>
        <authorList>
            <person name="Richardson D.N."/>
            <person name="Simmons M.P."/>
            <person name="Reddy A.S."/>
        </authorList>
    </citation>
    <scope>GENE FAMILY</scope>
    <scope>NOMENCLATURE</scope>
</reference>
<reference key="6">
    <citation type="journal article" date="2009" name="Plant Physiol.">
        <title>Large-scale Arabidopsis phosphoproteome profiling reveals novel chloroplast kinase substrates and phosphorylation networks.</title>
        <authorList>
            <person name="Reiland S."/>
            <person name="Messerli G."/>
            <person name="Baerenfaller K."/>
            <person name="Gerrits B."/>
            <person name="Endler A."/>
            <person name="Grossmann J."/>
            <person name="Gruissem W."/>
            <person name="Baginsky S."/>
        </authorList>
    </citation>
    <scope>IDENTIFICATION BY MASS SPECTROMETRY [LARGE SCALE ANALYSIS]</scope>
</reference>
<reference key="7">
    <citation type="journal article" date="2012" name="Protoplasma">
        <title>Functions of the Arabidopsis kinesin superfamily of microtubule-based motor proteins.</title>
        <authorList>
            <person name="Zhu C."/>
            <person name="Dixit R."/>
        </authorList>
    </citation>
    <scope>REVIEW</scope>
</reference>
<protein>
    <recommendedName>
        <fullName evidence="6">Kinesin-like protein KIN-7C, mitochondrial</fullName>
    </recommendedName>
    <alternativeName>
        <fullName evidence="4">Mitochondria-targeted kinesin-related protein 1</fullName>
    </alternativeName>
</protein>
<comment type="subcellular location">
    <subcellularLocation>
        <location evidence="1">Mitochondrion</location>
    </subcellularLocation>
</comment>
<comment type="similarity">
    <text evidence="5">Belongs to the TRAFAC class myosin-kinesin ATPase superfamily. Kinesin family. KIN-7 subfamily.</text>
</comment>
<comment type="sequence caution" evidence="6">
    <conflict type="erroneous gene model prediction">
        <sequence resource="EMBL-CDS" id="AAD41428"/>
    </conflict>
</comment>
<evidence type="ECO:0000255" key="1"/>
<evidence type="ECO:0000255" key="2">
    <source>
        <dbReference type="PROSITE-ProRule" id="PRU00283"/>
    </source>
</evidence>
<evidence type="ECO:0000256" key="3">
    <source>
        <dbReference type="SAM" id="MobiDB-lite"/>
    </source>
</evidence>
<evidence type="ECO:0000303" key="4">
    <source>
    </source>
</evidence>
<evidence type="ECO:0000303" key="5">
    <source>
    </source>
</evidence>
<evidence type="ECO:0000305" key="6"/>
<evidence type="ECO:0000312" key="7">
    <source>
        <dbReference type="Araport" id="AT1G21730"/>
    </source>
</evidence>
<evidence type="ECO:0000312" key="8">
    <source>
        <dbReference type="EMBL" id="AAD41428.1"/>
    </source>
</evidence>
<evidence type="ECO:0000312" key="9">
    <source>
        <dbReference type="EMBL" id="BAB71851.1"/>
    </source>
</evidence>
<sequence length="890" mass="98456">MSATRSQRSSTISPARPRRSPATIPMKRPETPSSSHFSASPVTSSSPLLRSSPSPSTSSAAASSTAVASTKLKENITVTIRFRPLSPREVNNGDEIAWYADGDYTIRNEYNPSLCYGFDRVFGPPTTTRRVYDIAAQQVVSGAMSGINGTVFAYGVTSSGKTHTMHGEQRSPGIIPLAVKDVFSIIQETPEREFLLRVSYLEIYNEVINDLLDPTGQNLRIREDSQGTYVEGIKDEVVLSPAHALSLIASGEEHRHVGSNNVNLFSSRSHTMFTLTIESSPHGKGDDGEDVSLSQLHLIDLAGSESSKTEITGQRRKEGSSINKSLLTLGTVISKLTDTKAAHIPYRDSKLTRLLQSTLSGHGRVSLICTITPASSTSEETHNTLKFAQRCKHVEIKASRNKIMDEKSLIKKYQKEISCLQEELTQLRHGNQDDLADRKLQVKLQSRLEDDEEAKAALMGRIQRLTKLILVSTKSSLQAASVKPDHIWRQAFGEDELAYLPDRRRENMADDGAVSTVSEHLKEPRDGNSSLDEMTKDRRKNKTRGMLGWLKLKKSDGVAGTLPTDGNQSQASGSPSSSSKYTQTKTTRRENAAAIKSIPEKTVAGDLFSATVGPEDSSPTGTTIADQMDLLHEQTKILVGEVALRTSSLNRLSEQAARNPEDFHIRDQIQKLEDEISEKKDQIRVLEQQIIEIFGMTPYASDSLGMPQVLSKLTMQLNEKIFEHEIKSADNRILQEQLQMTKSENAEMQETIILLRQQLDSLAERQSTQQIAGDESSGKNIHNRNGEESEIYSGAGTPTSVMSLNRVFAQEETKEIYNETALNSQALEIENLKKEKMRLIEEKDELGKLNKKLTEEASYAKELASAAAVELQNLAEEVTRLCNENAKLSR</sequence>
<feature type="transit peptide" description="Mitochondrion" evidence="4">
    <location>
        <begin position="1"/>
        <end position="73"/>
    </location>
</feature>
<feature type="chain" id="PRO_0000436461" description="Kinesin-like protein KIN-7C, mitochondrial">
    <location>
        <begin position="74"/>
        <end position="890"/>
    </location>
</feature>
<feature type="domain" description="Kinesin motor" evidence="2">
    <location>
        <begin position="75"/>
        <end position="394"/>
    </location>
</feature>
<feature type="region of interest" description="Disordered" evidence="3">
    <location>
        <begin position="1"/>
        <end position="66"/>
    </location>
</feature>
<feature type="region of interest" description="Disordered" evidence="3">
    <location>
        <begin position="511"/>
        <end position="595"/>
    </location>
</feature>
<feature type="region of interest" description="Disordered" evidence="3">
    <location>
        <begin position="768"/>
        <end position="797"/>
    </location>
</feature>
<feature type="coiled-coil region" evidence="1">
    <location>
        <begin position="395"/>
        <end position="468"/>
    </location>
</feature>
<feature type="coiled-coil region" evidence="1">
    <location>
        <begin position="664"/>
        <end position="693"/>
    </location>
</feature>
<feature type="coiled-coil region" evidence="1">
    <location>
        <begin position="729"/>
        <end position="765"/>
    </location>
</feature>
<feature type="coiled-coil region" evidence="1">
    <location>
        <begin position="818"/>
        <end position="884"/>
    </location>
</feature>
<feature type="compositionally biased region" description="Polar residues" evidence="3">
    <location>
        <begin position="1"/>
        <end position="13"/>
    </location>
</feature>
<feature type="compositionally biased region" description="Low complexity" evidence="3">
    <location>
        <begin position="40"/>
        <end position="66"/>
    </location>
</feature>
<feature type="compositionally biased region" description="Low complexity" evidence="3">
    <location>
        <begin position="569"/>
        <end position="579"/>
    </location>
</feature>
<feature type="binding site" evidence="2">
    <location>
        <begin position="155"/>
        <end position="162"/>
    </location>
    <ligand>
        <name>ATP</name>
        <dbReference type="ChEBI" id="CHEBI:30616"/>
    </ligand>
</feature>
<accession>Q8W5R6</accession>
<accession>Q9XI03</accession>
<name>KN7C_ARATH</name>
<proteinExistence type="evidence at protein level"/>